<reference key="1">
    <citation type="submission" date="2007-06" db="EMBL/GenBank/DDBJ databases">
        <authorList>
            <person name="Brinkac L.M."/>
            <person name="Daugherty S."/>
            <person name="Dodson R.J."/>
            <person name="Madupu R."/>
            <person name="Brown J.L."/>
            <person name="Bruce D."/>
            <person name="Detter C."/>
            <person name="Munk C."/>
            <person name="Smith L.A."/>
            <person name="Smith T.J."/>
            <person name="White O."/>
            <person name="Brettin T.S."/>
        </authorList>
    </citation>
    <scope>NUCLEOTIDE SEQUENCE [LARGE SCALE GENOMIC DNA]</scope>
    <source>
        <strain>Langeland / NCTC 10281 / Type F</strain>
    </source>
</reference>
<organism>
    <name type="scientific">Clostridium botulinum (strain Langeland / NCTC 10281 / Type F)</name>
    <dbReference type="NCBI Taxonomy" id="441772"/>
    <lineage>
        <taxon>Bacteria</taxon>
        <taxon>Bacillati</taxon>
        <taxon>Bacillota</taxon>
        <taxon>Clostridia</taxon>
        <taxon>Eubacteriales</taxon>
        <taxon>Clostridiaceae</taxon>
        <taxon>Clostridium</taxon>
    </lineage>
</organism>
<accession>A7GHL2</accession>
<proteinExistence type="inferred from homology"/>
<gene>
    <name evidence="1" type="primary">minE</name>
    <name type="ordered locus">CLI_3050</name>
</gene>
<evidence type="ECO:0000255" key="1">
    <source>
        <dbReference type="HAMAP-Rule" id="MF_00262"/>
    </source>
</evidence>
<comment type="function">
    <text evidence="1">Prevents the cell division inhibition by proteins MinC and MinD at internal division sites while permitting inhibition at polar sites. This ensures cell division at the proper site by restricting the formation of a division septum at the midpoint of the long axis of the cell.</text>
</comment>
<comment type="similarity">
    <text evidence="1">Belongs to the MinE family.</text>
</comment>
<dbReference type="EMBL" id="CP000728">
    <property type="protein sequence ID" value="ABS40663.1"/>
    <property type="molecule type" value="Genomic_DNA"/>
</dbReference>
<dbReference type="RefSeq" id="WP_003358099.1">
    <property type="nucleotide sequence ID" value="NC_009699.1"/>
</dbReference>
<dbReference type="SMR" id="A7GHL2"/>
<dbReference type="GeneID" id="5187008"/>
<dbReference type="KEGG" id="cbf:CLI_3050"/>
<dbReference type="HOGENOM" id="CLU_137929_1_0_9"/>
<dbReference type="Proteomes" id="UP000002410">
    <property type="component" value="Chromosome"/>
</dbReference>
<dbReference type="GO" id="GO:0051301">
    <property type="term" value="P:cell division"/>
    <property type="evidence" value="ECO:0007669"/>
    <property type="project" value="UniProtKB-KW"/>
</dbReference>
<dbReference type="GO" id="GO:0032955">
    <property type="term" value="P:regulation of division septum assembly"/>
    <property type="evidence" value="ECO:0007669"/>
    <property type="project" value="InterPro"/>
</dbReference>
<dbReference type="FunFam" id="3.30.1070.10:FF:000003">
    <property type="entry name" value="Cell division topological specificity factor"/>
    <property type="match status" value="1"/>
</dbReference>
<dbReference type="Gene3D" id="3.30.1070.10">
    <property type="entry name" value="Cell division topological specificity factor MinE"/>
    <property type="match status" value="1"/>
</dbReference>
<dbReference type="HAMAP" id="MF_00262">
    <property type="entry name" value="MinE"/>
    <property type="match status" value="1"/>
</dbReference>
<dbReference type="InterPro" id="IPR005527">
    <property type="entry name" value="MinE"/>
</dbReference>
<dbReference type="InterPro" id="IPR036707">
    <property type="entry name" value="MinE_sf"/>
</dbReference>
<dbReference type="NCBIfam" id="TIGR01215">
    <property type="entry name" value="minE"/>
    <property type="match status" value="1"/>
</dbReference>
<dbReference type="NCBIfam" id="NF001422">
    <property type="entry name" value="PRK00296.1"/>
    <property type="match status" value="1"/>
</dbReference>
<dbReference type="Pfam" id="PF03776">
    <property type="entry name" value="MinE"/>
    <property type="match status" value="1"/>
</dbReference>
<dbReference type="SUPFAM" id="SSF55229">
    <property type="entry name" value="Cell division protein MinE topological specificity domain"/>
    <property type="match status" value="1"/>
</dbReference>
<name>MINE_CLOBL</name>
<sequence>MDLFKFFSKQSSKDVAKERLKLILIQDRNSISPDVLESIREDMLKVISKYIEIDNEDVDIKMSSVEEIEGMSPALIASIPIKRIKKK</sequence>
<keyword id="KW-0131">Cell cycle</keyword>
<keyword id="KW-0132">Cell division</keyword>
<feature type="chain" id="PRO_1000047782" description="Cell division topological specificity factor">
    <location>
        <begin position="1"/>
        <end position="87"/>
    </location>
</feature>
<protein>
    <recommendedName>
        <fullName evidence="1">Cell division topological specificity factor</fullName>
    </recommendedName>
</protein>